<gene>
    <name type="primary">CHH3</name>
</gene>
<evidence type="ECO:0000250" key="1"/>
<evidence type="ECO:0000255" key="2"/>
<evidence type="ECO:0000305" key="3"/>
<dbReference type="EMBL" id="AF104388">
    <property type="protein sequence ID" value="AAC84144.1"/>
    <property type="molecule type" value="mRNA"/>
</dbReference>
<dbReference type="SMR" id="O97385"/>
<dbReference type="OrthoDB" id="6330469at2759"/>
<dbReference type="GO" id="GO:0005576">
    <property type="term" value="C:extracellular region"/>
    <property type="evidence" value="ECO:0007669"/>
    <property type="project" value="UniProtKB-SubCell"/>
</dbReference>
<dbReference type="GO" id="GO:0005184">
    <property type="term" value="F:neuropeptide hormone activity"/>
    <property type="evidence" value="ECO:0007669"/>
    <property type="project" value="InterPro"/>
</dbReference>
<dbReference type="GO" id="GO:0007623">
    <property type="term" value="P:circadian rhythm"/>
    <property type="evidence" value="ECO:0007669"/>
    <property type="project" value="TreeGrafter"/>
</dbReference>
<dbReference type="GO" id="GO:0006006">
    <property type="term" value="P:glucose metabolic process"/>
    <property type="evidence" value="ECO:0007669"/>
    <property type="project" value="UniProtKB-KW"/>
</dbReference>
<dbReference type="GO" id="GO:0007218">
    <property type="term" value="P:neuropeptide signaling pathway"/>
    <property type="evidence" value="ECO:0007669"/>
    <property type="project" value="UniProtKB-KW"/>
</dbReference>
<dbReference type="Gene3D" id="1.10.2010.10">
    <property type="entry name" value="Crustacean CHH/MIH/GIH neurohormone"/>
    <property type="match status" value="1"/>
</dbReference>
<dbReference type="InterPro" id="IPR018251">
    <property type="entry name" value="Crust_neurhormone_CS"/>
</dbReference>
<dbReference type="InterPro" id="IPR031098">
    <property type="entry name" value="Crust_neurohorm"/>
</dbReference>
<dbReference type="InterPro" id="IPR035957">
    <property type="entry name" value="Crust_neurohorm_sf"/>
</dbReference>
<dbReference type="InterPro" id="IPR001166">
    <property type="entry name" value="Hyperglycemic"/>
</dbReference>
<dbReference type="InterPro" id="IPR000346">
    <property type="entry name" value="Hyperglycemic1"/>
</dbReference>
<dbReference type="PANTHER" id="PTHR35981">
    <property type="entry name" value="ION TRANSPORT PEPTIDE, ISOFORM C"/>
    <property type="match status" value="1"/>
</dbReference>
<dbReference type="PANTHER" id="PTHR35981:SF2">
    <property type="entry name" value="ION TRANSPORT PEPTIDE, ISOFORM C"/>
    <property type="match status" value="1"/>
</dbReference>
<dbReference type="Pfam" id="PF01147">
    <property type="entry name" value="Crust_neurohorm"/>
    <property type="match status" value="1"/>
</dbReference>
<dbReference type="PRINTS" id="PR00548">
    <property type="entry name" value="HYPRGLYCEMC1"/>
</dbReference>
<dbReference type="PRINTS" id="PR00550">
    <property type="entry name" value="HYPRGLYCEMIC"/>
</dbReference>
<dbReference type="SUPFAM" id="SSF81778">
    <property type="entry name" value="Crustacean CHH/MIH/GIH neurohormone"/>
    <property type="match status" value="1"/>
</dbReference>
<dbReference type="PROSITE" id="PS01250">
    <property type="entry name" value="CHH_MIH_GIH"/>
    <property type="match status" value="1"/>
</dbReference>
<comment type="function">
    <text evidence="1">Hormone found in the sinus gland of isopods and decapods which controls the blood sugar level. Has a secretagogue action over the amylase released from the midgut gland. May act as a stress hormone and may be involved in the control of molting and reproduction (By similarity).</text>
</comment>
<comment type="subcellular location">
    <subcellularLocation>
        <location>Secreted</location>
    </subcellularLocation>
</comment>
<comment type="similarity">
    <text evidence="3">Belongs to the arthropod CHH/MIH/GIH/VIH hormone family.</text>
</comment>
<keyword id="KW-0027">Amidation</keyword>
<keyword id="KW-0119">Carbohydrate metabolism</keyword>
<keyword id="KW-0165">Cleavage on pair of basic residues</keyword>
<keyword id="KW-1015">Disulfide bond</keyword>
<keyword id="KW-0313">Glucose metabolism</keyword>
<keyword id="KW-0372">Hormone</keyword>
<keyword id="KW-0527">Neuropeptide</keyword>
<keyword id="KW-0964">Secreted</keyword>
<keyword id="KW-0732">Signal</keyword>
<accession>O97385</accession>
<protein>
    <recommendedName>
        <fullName>Crustacean hyperglycemic hormones 3</fullName>
    </recommendedName>
    <alternativeName>
        <fullName>Pm-SGP-III</fullName>
    </alternativeName>
    <component>
        <recommendedName>
            <fullName>CHH precursor-related peptide 3</fullName>
            <shortName>CPRP 3</shortName>
        </recommendedName>
    </component>
    <component>
        <recommendedName>
            <fullName>Crustacean hyperglycemic hormone 3</fullName>
            <shortName>CHH 3</shortName>
        </recommendedName>
    </component>
</protein>
<organism>
    <name type="scientific">Penaeus monodon</name>
    <name type="common">Giant tiger prawn</name>
    <dbReference type="NCBI Taxonomy" id="6687"/>
    <lineage>
        <taxon>Eukaryota</taxon>
        <taxon>Metazoa</taxon>
        <taxon>Ecdysozoa</taxon>
        <taxon>Arthropoda</taxon>
        <taxon>Crustacea</taxon>
        <taxon>Multicrustacea</taxon>
        <taxon>Malacostraca</taxon>
        <taxon>Eumalacostraca</taxon>
        <taxon>Eucarida</taxon>
        <taxon>Decapoda</taxon>
        <taxon>Dendrobranchiata</taxon>
        <taxon>Penaeoidea</taxon>
        <taxon>Penaeidae</taxon>
        <taxon>Penaeus</taxon>
    </lineage>
</organism>
<name>CHH3_PENMO</name>
<reference key="1">
    <citation type="journal article" date="2000" name="Mar. Biotechnol.">
        <title>Five crustacean hyperglycemic family hormones of Penaeus monodon: complementary DNA sequence and identification in single sinus glands by electrospray ionization-Fourier transform mass spectrometry.</title>
        <authorList>
            <person name="Davey M.L."/>
            <person name="Hall M.R."/>
            <person name="Willis R.H."/>
            <person name="Oliver R.W.A."/>
            <person name="Thurn M.J."/>
            <person name="Wilson K.J."/>
        </authorList>
    </citation>
    <scope>NUCLEOTIDE SEQUENCE [MRNA]</scope>
    <source>
        <tissue>Eyestalk</tissue>
    </source>
</reference>
<sequence length="102" mass="11621">MIALRLIAVTLVVAMAASTTWARSFNKRANFDPSCAGVYNRELLGRLSRLCDDCYNVFREPKVATECRNNCFYNPVFVQCLEYLIPADLHEEYQAHVQTVGK</sequence>
<proteinExistence type="inferred from homology"/>
<feature type="signal peptide" evidence="2">
    <location>
        <begin position="1"/>
        <end position="22"/>
    </location>
</feature>
<feature type="peptide" id="PRO_0000019065" description="CHH precursor-related peptide 3">
    <location>
        <begin position="23"/>
        <end position="26"/>
    </location>
</feature>
<feature type="peptide" id="PRO_0000019066" description="Crustacean hyperglycemic hormone 3">
    <location>
        <begin position="29"/>
        <end position="100"/>
    </location>
</feature>
<feature type="modified residue" description="Valine amide" evidence="1">
    <location>
        <position position="100"/>
    </location>
</feature>
<feature type="disulfide bond" evidence="1">
    <location>
        <begin position="35"/>
        <end position="71"/>
    </location>
</feature>
<feature type="disulfide bond" evidence="1">
    <location>
        <begin position="51"/>
        <end position="67"/>
    </location>
</feature>
<feature type="disulfide bond" evidence="1">
    <location>
        <begin position="54"/>
        <end position="80"/>
    </location>
</feature>